<evidence type="ECO:0000255" key="1">
    <source>
        <dbReference type="HAMAP-Rule" id="MF_00114"/>
    </source>
</evidence>
<evidence type="ECO:0000305" key="2"/>
<name>DEOC1_STAAN</name>
<dbReference type="EC" id="4.1.2.4" evidence="1"/>
<dbReference type="EMBL" id="BA000018">
    <property type="protein sequence ID" value="BAB41353.1"/>
    <property type="molecule type" value="Genomic_DNA"/>
</dbReference>
<dbReference type="PIR" id="F89774">
    <property type="entry name" value="F89774"/>
</dbReference>
<dbReference type="SMR" id="P99102"/>
<dbReference type="EnsemblBacteria" id="BAB41353">
    <property type="protein sequence ID" value="BAB41353"/>
    <property type="gene ID" value="BAB41353"/>
</dbReference>
<dbReference type="KEGG" id="sau:SA0133"/>
<dbReference type="HOGENOM" id="CLU_053595_0_1_9"/>
<dbReference type="UniPathway" id="UPA00002">
    <property type="reaction ID" value="UER00468"/>
</dbReference>
<dbReference type="GO" id="GO:0005737">
    <property type="term" value="C:cytoplasm"/>
    <property type="evidence" value="ECO:0007669"/>
    <property type="project" value="UniProtKB-SubCell"/>
</dbReference>
<dbReference type="GO" id="GO:0004139">
    <property type="term" value="F:deoxyribose-phosphate aldolase activity"/>
    <property type="evidence" value="ECO:0007669"/>
    <property type="project" value="UniProtKB-UniRule"/>
</dbReference>
<dbReference type="GO" id="GO:0006018">
    <property type="term" value="P:2-deoxyribose 1-phosphate catabolic process"/>
    <property type="evidence" value="ECO:0007669"/>
    <property type="project" value="UniProtKB-UniRule"/>
</dbReference>
<dbReference type="GO" id="GO:0016052">
    <property type="term" value="P:carbohydrate catabolic process"/>
    <property type="evidence" value="ECO:0007669"/>
    <property type="project" value="TreeGrafter"/>
</dbReference>
<dbReference type="GO" id="GO:0009264">
    <property type="term" value="P:deoxyribonucleotide catabolic process"/>
    <property type="evidence" value="ECO:0007669"/>
    <property type="project" value="InterPro"/>
</dbReference>
<dbReference type="CDD" id="cd00959">
    <property type="entry name" value="DeoC"/>
    <property type="match status" value="1"/>
</dbReference>
<dbReference type="FunFam" id="3.20.20.70:FF:000044">
    <property type="entry name" value="Deoxyribose-phosphate aldolase"/>
    <property type="match status" value="1"/>
</dbReference>
<dbReference type="Gene3D" id="3.20.20.70">
    <property type="entry name" value="Aldolase class I"/>
    <property type="match status" value="1"/>
</dbReference>
<dbReference type="HAMAP" id="MF_00114">
    <property type="entry name" value="DeoC_type1"/>
    <property type="match status" value="1"/>
</dbReference>
<dbReference type="InterPro" id="IPR013785">
    <property type="entry name" value="Aldolase_TIM"/>
</dbReference>
<dbReference type="InterPro" id="IPR011343">
    <property type="entry name" value="DeoC"/>
</dbReference>
<dbReference type="InterPro" id="IPR002915">
    <property type="entry name" value="DeoC/FbaB/LacD_aldolase"/>
</dbReference>
<dbReference type="InterPro" id="IPR028581">
    <property type="entry name" value="DeoC_typeI"/>
</dbReference>
<dbReference type="NCBIfam" id="TIGR00126">
    <property type="entry name" value="deoC"/>
    <property type="match status" value="1"/>
</dbReference>
<dbReference type="PANTHER" id="PTHR10889">
    <property type="entry name" value="DEOXYRIBOSE-PHOSPHATE ALDOLASE"/>
    <property type="match status" value="1"/>
</dbReference>
<dbReference type="PANTHER" id="PTHR10889:SF1">
    <property type="entry name" value="DEOXYRIBOSE-PHOSPHATE ALDOLASE"/>
    <property type="match status" value="1"/>
</dbReference>
<dbReference type="Pfam" id="PF01791">
    <property type="entry name" value="DeoC"/>
    <property type="match status" value="1"/>
</dbReference>
<dbReference type="PIRSF" id="PIRSF001357">
    <property type="entry name" value="DeoC"/>
    <property type="match status" value="1"/>
</dbReference>
<dbReference type="SMART" id="SM01133">
    <property type="entry name" value="DeoC"/>
    <property type="match status" value="1"/>
</dbReference>
<dbReference type="SUPFAM" id="SSF51569">
    <property type="entry name" value="Aldolase"/>
    <property type="match status" value="1"/>
</dbReference>
<organism>
    <name type="scientific">Staphylococcus aureus (strain N315)</name>
    <dbReference type="NCBI Taxonomy" id="158879"/>
    <lineage>
        <taxon>Bacteria</taxon>
        <taxon>Bacillati</taxon>
        <taxon>Bacillota</taxon>
        <taxon>Bacilli</taxon>
        <taxon>Bacillales</taxon>
        <taxon>Staphylococcaceae</taxon>
        <taxon>Staphylococcus</taxon>
    </lineage>
</organism>
<sequence>MKFEKYIDHTLLKPESTRTQIDQIIDEAKAYNFKSVCVNPTHVKYAAERLADSEVLVCTVIGFPLGASTTATKAFETEDAIQNGADEIDMVINIGALKDGRFDDVQQDIEAVVKAAKGHTVKVIIETVLLDHDEIVKASELTKAAGADFVKTSTGFAGGGATAEDVKLMKDTVGADVEVKASGGVRNLEDFNKMVEAGATRIGASAGVQIMQGLEADSDY</sequence>
<protein>
    <recommendedName>
        <fullName evidence="1">Deoxyribose-phosphate aldolase 1</fullName>
        <shortName evidence="1">DERA 1</shortName>
        <ecNumber evidence="1">4.1.2.4</ecNumber>
    </recommendedName>
    <alternativeName>
        <fullName evidence="1">2-deoxy-D-ribose 5-phosphate aldolase 1</fullName>
    </alternativeName>
    <alternativeName>
        <fullName evidence="1">Phosphodeoxyriboaldolase 1</fullName>
        <shortName evidence="1">Deoxyriboaldolase 1</shortName>
    </alternativeName>
</protein>
<keyword id="KW-0963">Cytoplasm</keyword>
<keyword id="KW-0456">Lyase</keyword>
<keyword id="KW-0704">Schiff base</keyword>
<reference key="1">
    <citation type="journal article" date="2001" name="Lancet">
        <title>Whole genome sequencing of meticillin-resistant Staphylococcus aureus.</title>
        <authorList>
            <person name="Kuroda M."/>
            <person name="Ohta T."/>
            <person name="Uchiyama I."/>
            <person name="Baba T."/>
            <person name="Yuzawa H."/>
            <person name="Kobayashi I."/>
            <person name="Cui L."/>
            <person name="Oguchi A."/>
            <person name="Aoki K."/>
            <person name="Nagai Y."/>
            <person name="Lian J.-Q."/>
            <person name="Ito T."/>
            <person name="Kanamori M."/>
            <person name="Matsumaru H."/>
            <person name="Maruyama A."/>
            <person name="Murakami H."/>
            <person name="Hosoyama A."/>
            <person name="Mizutani-Ui Y."/>
            <person name="Takahashi N.K."/>
            <person name="Sawano T."/>
            <person name="Inoue R."/>
            <person name="Kaito C."/>
            <person name="Sekimizu K."/>
            <person name="Hirakawa H."/>
            <person name="Kuhara S."/>
            <person name="Goto S."/>
            <person name="Yabuzaki J."/>
            <person name="Kanehisa M."/>
            <person name="Yamashita A."/>
            <person name="Oshima K."/>
            <person name="Furuya K."/>
            <person name="Yoshino C."/>
            <person name="Shiba T."/>
            <person name="Hattori M."/>
            <person name="Ogasawara N."/>
            <person name="Hayashi H."/>
            <person name="Hiramatsu K."/>
        </authorList>
    </citation>
    <scope>NUCLEOTIDE SEQUENCE [LARGE SCALE GENOMIC DNA]</scope>
    <source>
        <strain>N315</strain>
    </source>
</reference>
<reference key="2">
    <citation type="journal article" date="2005" name="J. Microbiol. Methods">
        <title>Correlation of proteomic and transcriptomic profiles of Staphylococcus aureus during the post-exponential phase of growth.</title>
        <authorList>
            <person name="Scherl A."/>
            <person name="Francois P."/>
            <person name="Bento M."/>
            <person name="Deshusses J.M."/>
            <person name="Charbonnier Y."/>
            <person name="Converset V."/>
            <person name="Huyghe A."/>
            <person name="Walter N."/>
            <person name="Hoogland C."/>
            <person name="Appel R.D."/>
            <person name="Sanchez J.-C."/>
            <person name="Zimmermann-Ivol C.G."/>
            <person name="Corthals G.L."/>
            <person name="Hochstrasser D.F."/>
            <person name="Schrenzel J."/>
        </authorList>
    </citation>
    <scope>IDENTIFICATION BY MASS SPECTROMETRY</scope>
    <source>
        <strain>N315</strain>
    </source>
</reference>
<reference key="3">
    <citation type="submission" date="2007-10" db="UniProtKB">
        <title>Shotgun proteomic analysis of total and membrane protein extracts of S. aureus strain N315.</title>
        <authorList>
            <person name="Vaezzadeh A.R."/>
            <person name="Deshusses J."/>
            <person name="Lescuyer P."/>
            <person name="Hochstrasser D.F."/>
        </authorList>
    </citation>
    <scope>IDENTIFICATION BY MASS SPECTROMETRY [LARGE SCALE ANALYSIS]</scope>
    <source>
        <strain>N315</strain>
    </source>
</reference>
<feature type="chain" id="PRO_0000057259" description="Deoxyribose-phosphate aldolase 1">
    <location>
        <begin position="1"/>
        <end position="220"/>
    </location>
</feature>
<feature type="active site" description="Proton donor/acceptor" evidence="1">
    <location>
        <position position="89"/>
    </location>
</feature>
<feature type="active site" description="Schiff-base intermediate with acetaldehyde" evidence="1">
    <location>
        <position position="151"/>
    </location>
</feature>
<feature type="active site" description="Proton donor/acceptor" evidence="1">
    <location>
        <position position="180"/>
    </location>
</feature>
<comment type="function">
    <text evidence="1">Catalyzes a reversible aldol reaction between acetaldehyde and D-glyceraldehyde 3-phosphate to generate 2-deoxy-D-ribose 5-phosphate.</text>
</comment>
<comment type="catalytic activity">
    <reaction evidence="1">
        <text>2-deoxy-D-ribose 5-phosphate = D-glyceraldehyde 3-phosphate + acetaldehyde</text>
        <dbReference type="Rhea" id="RHEA:12821"/>
        <dbReference type="ChEBI" id="CHEBI:15343"/>
        <dbReference type="ChEBI" id="CHEBI:59776"/>
        <dbReference type="ChEBI" id="CHEBI:62877"/>
        <dbReference type="EC" id="4.1.2.4"/>
    </reaction>
</comment>
<comment type="pathway">
    <text evidence="1">Carbohydrate degradation; 2-deoxy-D-ribose 1-phosphate degradation; D-glyceraldehyde 3-phosphate and acetaldehyde from 2-deoxy-alpha-D-ribose 1-phosphate: step 2/2.</text>
</comment>
<comment type="subcellular location">
    <subcellularLocation>
        <location evidence="1">Cytoplasm</location>
    </subcellularLocation>
</comment>
<comment type="similarity">
    <text evidence="1 2">Belongs to the DeoC/FbaB aldolase family. DeoC type 1 subfamily.</text>
</comment>
<gene>
    <name evidence="1" type="primary">deoC1</name>
    <name type="synonym">dra</name>
    <name type="ordered locus">SA0133</name>
</gene>
<proteinExistence type="evidence at protein level"/>
<accession>P99102</accession>
<accession>Q99X77</accession>